<keyword id="KW-1003">Cell membrane</keyword>
<keyword id="KW-1015">Disulfide bond</keyword>
<keyword id="KW-0297">G-protein coupled receptor</keyword>
<keyword id="KW-0325">Glycoprotein</keyword>
<keyword id="KW-0449">Lipoprotein</keyword>
<keyword id="KW-0472">Membrane</keyword>
<keyword id="KW-0564">Palmitate</keyword>
<keyword id="KW-0597">Phosphoprotein</keyword>
<keyword id="KW-0675">Receptor</keyword>
<keyword id="KW-1185">Reference proteome</keyword>
<keyword id="KW-0765">Sulfation</keyword>
<keyword id="KW-0807">Transducer</keyword>
<keyword id="KW-0812">Transmembrane</keyword>
<keyword id="KW-1133">Transmembrane helix</keyword>
<protein>
    <recommendedName>
        <fullName>C-C chemokine receptor type 5</fullName>
        <shortName>C-C CKR-5</shortName>
        <shortName>CC-CKR-5</shortName>
        <shortName>CCR-5</shortName>
    </recommendedName>
    <alternativeName>
        <fullName>MIP-1 alpha receptor</fullName>
    </alternativeName>
    <cdAntigenName>CD195</cdAntigenName>
</protein>
<sequence>MDFQGSIPTYIYDIDYSMSAPCQKVNVKQIAAQLLPPLYSLVFIFGFVGNMMVFLILISCKKLKSMTDIYLFNLAISDLLFLLTLPFWAHYAANEWVFGNIMCKLFTGIYHIGYFGGIFFIILLTIDRYLAIVHAVFAIKARTVNFGVITSVVTWVVAVFVSLPEIIFMRSQKEGSHYTCSPHFLHIQYRFWKHFQTLKMVILSLILPLLVMVICYSGILNTLFRCRNEKKRHRAVRLIFAIMIVYFLFWTPYNIVLLLTTFQEYFGLNNCSSSNRLDQAMQVTETLGMTHCCLNPVIYAFVGEKFRNYLSVFFRKHIVKRFCKHCSIFQQVNPDRVSSVYTRSTGEQEVSTGL</sequence>
<proteinExistence type="evidence at transcript level"/>
<comment type="function">
    <text evidence="1">Receptor for a number of inflammatory CC-chemokines including CCL3/MIP-1-alpha, CCL4/MIP-1-beta and RANTES and subsequently transduces a signal by increasing the intracellular calcium ion level. May play a role in the control of granulocytic lineage proliferation or differentiation. Participates in T-lymphocyte migration to the infection site by acting as a chemotactic receptor.</text>
</comment>
<comment type="subunit">
    <text evidence="1">Interacts with PRAF2. Efficient ligand binding to CCL3/MIP-1alpha and CCL4/MIP-1beta requires sulfation, O-glycosylation and sialic acid modifications. Glycosylation on Ser-6 is required for efficient binding of CCL4. Interacts with GRK2. Interacts with ARRB1 and ARRB2. Interacts with CNIH4. Interacts with S100A4; this interaction stimulates T-lymphocyte chemotaxis.</text>
</comment>
<comment type="subcellular location">
    <subcellularLocation>
        <location>Cell membrane</location>
        <topology>Multi-pass membrane protein</topology>
    </subcellularLocation>
</comment>
<comment type="PTM">
    <text evidence="1">Sulfated on at least 2 of the N-terminal tyrosines. Sulfation is required for efficient binding of the chemokines, CCL3 and CCL4 (By similarity).</text>
</comment>
<comment type="PTM">
    <text evidence="1">O-glycosylated, but not N-glycosylated. Ser-6 appears to be the major site. Also sialylated glycans present which contribute to chemokine binding. Ser-17 may also be glycosylated and, if so, with small moieties such as a T-antigen (By similarity).</text>
</comment>
<comment type="PTM">
    <text evidence="1">Palmitoylation in the C-terminal is important for cell surface expression.</text>
</comment>
<comment type="PTM">
    <text evidence="1">Phosphorylation on serine residues in the C-terminal is stimulated by binding CC chemokines especially by APO-RANTES.</text>
</comment>
<comment type="similarity">
    <text evidence="3">Belongs to the G-protein coupled receptor 1 family.</text>
</comment>
<dbReference type="EMBL" id="Y12009">
    <property type="protein sequence ID" value="CAA72737.1"/>
    <property type="molecule type" value="mRNA"/>
</dbReference>
<dbReference type="EMBL" id="U77350">
    <property type="protein sequence ID" value="AAC03243.1"/>
    <property type="molecule type" value="Genomic_DNA"/>
</dbReference>
<dbReference type="RefSeq" id="NP_446412.2">
    <property type="nucleotide sequence ID" value="NM_053960.3"/>
</dbReference>
<dbReference type="SMR" id="O08556"/>
<dbReference type="FunCoup" id="O08556">
    <property type="interactions" value="442"/>
</dbReference>
<dbReference type="STRING" id="10116.ENSRNOP00000073121"/>
<dbReference type="BindingDB" id="O08556"/>
<dbReference type="ChEMBL" id="CHEMBL1795146"/>
<dbReference type="GlyCosmos" id="O08556">
    <property type="glycosylation" value="1 site, No reported glycans"/>
</dbReference>
<dbReference type="GlyGen" id="O08556">
    <property type="glycosylation" value="1 site"/>
</dbReference>
<dbReference type="iPTMnet" id="O08556"/>
<dbReference type="PhosphoSitePlus" id="O08556"/>
<dbReference type="SwissPalm" id="O08556"/>
<dbReference type="PaxDb" id="10116-ENSRNOP00000066146"/>
<dbReference type="GeneID" id="117029"/>
<dbReference type="KEGG" id="rno:117029"/>
<dbReference type="UCSC" id="RGD:620596">
    <property type="organism name" value="rat"/>
</dbReference>
<dbReference type="AGR" id="RGD:620596"/>
<dbReference type="CTD" id="1234"/>
<dbReference type="RGD" id="620596">
    <property type="gene designation" value="Ccr5"/>
</dbReference>
<dbReference type="eggNOG" id="KOG3656">
    <property type="taxonomic scope" value="Eukaryota"/>
</dbReference>
<dbReference type="InParanoid" id="O08556"/>
<dbReference type="OrthoDB" id="9876908at2759"/>
<dbReference type="PhylomeDB" id="O08556"/>
<dbReference type="Reactome" id="R-RNO-380108">
    <property type="pathway name" value="Chemokine receptors bind chemokines"/>
</dbReference>
<dbReference type="Reactome" id="R-RNO-418594">
    <property type="pathway name" value="G alpha (i) signalling events"/>
</dbReference>
<dbReference type="PRO" id="PR:O08556"/>
<dbReference type="Proteomes" id="UP000002494">
    <property type="component" value="Unplaced"/>
</dbReference>
<dbReference type="GO" id="GO:0009986">
    <property type="term" value="C:cell surface"/>
    <property type="evidence" value="ECO:0000314"/>
    <property type="project" value="RGD"/>
</dbReference>
<dbReference type="GO" id="GO:0005737">
    <property type="term" value="C:cytoplasm"/>
    <property type="evidence" value="ECO:0000318"/>
    <property type="project" value="GO_Central"/>
</dbReference>
<dbReference type="GO" id="GO:0005768">
    <property type="term" value="C:endosome"/>
    <property type="evidence" value="ECO:0000314"/>
    <property type="project" value="RGD"/>
</dbReference>
<dbReference type="GO" id="GO:0009897">
    <property type="term" value="C:external side of plasma membrane"/>
    <property type="evidence" value="ECO:0000250"/>
    <property type="project" value="UniProtKB"/>
</dbReference>
<dbReference type="GO" id="GO:0003779">
    <property type="term" value="F:actin binding"/>
    <property type="evidence" value="ECO:0000266"/>
    <property type="project" value="RGD"/>
</dbReference>
<dbReference type="GO" id="GO:0019957">
    <property type="term" value="F:C-C chemokine binding"/>
    <property type="evidence" value="ECO:0000266"/>
    <property type="project" value="RGD"/>
</dbReference>
<dbReference type="GO" id="GO:0016493">
    <property type="term" value="F:C-C chemokine receptor activity"/>
    <property type="evidence" value="ECO:0000250"/>
    <property type="project" value="UniProtKB"/>
</dbReference>
<dbReference type="GO" id="GO:0071791">
    <property type="term" value="F:chemokine (C-C motif) ligand 5 binding"/>
    <property type="evidence" value="ECO:0000266"/>
    <property type="project" value="RGD"/>
</dbReference>
<dbReference type="GO" id="GO:0042802">
    <property type="term" value="F:identical protein binding"/>
    <property type="evidence" value="ECO:0000266"/>
    <property type="project" value="RGD"/>
</dbReference>
<dbReference type="GO" id="GO:0019901">
    <property type="term" value="F:protein kinase binding"/>
    <property type="evidence" value="ECO:0000353"/>
    <property type="project" value="RGD"/>
</dbReference>
<dbReference type="GO" id="GO:0006915">
    <property type="term" value="P:apoptotic process"/>
    <property type="evidence" value="ECO:0000266"/>
    <property type="project" value="RGD"/>
</dbReference>
<dbReference type="GO" id="GO:0006816">
    <property type="term" value="P:calcium ion transport"/>
    <property type="evidence" value="ECO:0000266"/>
    <property type="project" value="RGD"/>
</dbReference>
<dbReference type="GO" id="GO:0019722">
    <property type="term" value="P:calcium-mediated signaling"/>
    <property type="evidence" value="ECO:0000266"/>
    <property type="project" value="RGD"/>
</dbReference>
<dbReference type="GO" id="GO:0060326">
    <property type="term" value="P:cell chemotaxis"/>
    <property type="evidence" value="ECO:0000318"/>
    <property type="project" value="GO_Central"/>
</dbReference>
<dbReference type="GO" id="GO:0007267">
    <property type="term" value="P:cell-cell signaling"/>
    <property type="evidence" value="ECO:0000266"/>
    <property type="project" value="RGD"/>
</dbReference>
<dbReference type="GO" id="GO:0071222">
    <property type="term" value="P:cellular response to lipopolysaccharide"/>
    <property type="evidence" value="ECO:0000266"/>
    <property type="project" value="RGD"/>
</dbReference>
<dbReference type="GO" id="GO:0071560">
    <property type="term" value="P:cellular response to transforming growth factor beta stimulus"/>
    <property type="evidence" value="ECO:0000270"/>
    <property type="project" value="RGD"/>
</dbReference>
<dbReference type="GO" id="GO:0071356">
    <property type="term" value="P:cellular response to tumor necrosis factor"/>
    <property type="evidence" value="ECO:0000270"/>
    <property type="project" value="RGD"/>
</dbReference>
<dbReference type="GO" id="GO:0006952">
    <property type="term" value="P:defense response"/>
    <property type="evidence" value="ECO:0000266"/>
    <property type="project" value="RGD"/>
</dbReference>
<dbReference type="GO" id="GO:0042742">
    <property type="term" value="P:defense response to bacterium"/>
    <property type="evidence" value="ECO:0000270"/>
    <property type="project" value="RGD"/>
</dbReference>
<dbReference type="GO" id="GO:0045444">
    <property type="term" value="P:fat cell differentiation"/>
    <property type="evidence" value="ECO:0000270"/>
    <property type="project" value="RGD"/>
</dbReference>
<dbReference type="GO" id="GO:0030900">
    <property type="term" value="P:forebrain development"/>
    <property type="evidence" value="ECO:0000270"/>
    <property type="project" value="RGD"/>
</dbReference>
<dbReference type="GO" id="GO:0007186">
    <property type="term" value="P:G protein-coupled receptor signaling pathway"/>
    <property type="evidence" value="ECO:0000266"/>
    <property type="project" value="RGD"/>
</dbReference>
<dbReference type="GO" id="GO:0006955">
    <property type="term" value="P:immune response"/>
    <property type="evidence" value="ECO:0000318"/>
    <property type="project" value="GO_Central"/>
</dbReference>
<dbReference type="GO" id="GO:0006954">
    <property type="term" value="P:inflammatory response"/>
    <property type="evidence" value="ECO:0000318"/>
    <property type="project" value="GO_Central"/>
</dbReference>
<dbReference type="GO" id="GO:0002437">
    <property type="term" value="P:inflammatory response to antigenic stimulus"/>
    <property type="evidence" value="ECO:0000270"/>
    <property type="project" value="RGD"/>
</dbReference>
<dbReference type="GO" id="GO:0050900">
    <property type="term" value="P:leukocyte migration"/>
    <property type="evidence" value="ECO:0000304"/>
    <property type="project" value="RGD"/>
</dbReference>
<dbReference type="GO" id="GO:0000165">
    <property type="term" value="P:MAPK cascade"/>
    <property type="evidence" value="ECO:0000266"/>
    <property type="project" value="RGD"/>
</dbReference>
<dbReference type="GO" id="GO:0030517">
    <property type="term" value="P:negative regulation of axon extension"/>
    <property type="evidence" value="ECO:0000315"/>
    <property type="project" value="RGD"/>
</dbReference>
<dbReference type="GO" id="GO:2000110">
    <property type="term" value="P:negative regulation of macrophage apoptotic process"/>
    <property type="evidence" value="ECO:0000266"/>
    <property type="project" value="RGD"/>
</dbReference>
<dbReference type="GO" id="GO:2000178">
    <property type="term" value="P:negative regulation of neural precursor cell proliferation"/>
    <property type="evidence" value="ECO:0000315"/>
    <property type="project" value="RGD"/>
</dbReference>
<dbReference type="GO" id="GO:0031343">
    <property type="term" value="P:positive regulation of cell killing"/>
    <property type="evidence" value="ECO:0000315"/>
    <property type="project" value="RGD"/>
</dbReference>
<dbReference type="GO" id="GO:0022409">
    <property type="term" value="P:positive regulation of cell-cell adhesion"/>
    <property type="evidence" value="ECO:0000315"/>
    <property type="project" value="RGD"/>
</dbReference>
<dbReference type="GO" id="GO:0007204">
    <property type="term" value="P:positive regulation of cytosolic calcium ion concentration"/>
    <property type="evidence" value="ECO:0000315"/>
    <property type="project" value="RGD"/>
</dbReference>
<dbReference type="GO" id="GO:0031622">
    <property type="term" value="P:positive regulation of fever generation"/>
    <property type="evidence" value="ECO:0000315"/>
    <property type="project" value="RGD"/>
</dbReference>
<dbReference type="GO" id="GO:0010628">
    <property type="term" value="P:positive regulation of gene expression"/>
    <property type="evidence" value="ECO:0000315"/>
    <property type="project" value="RGD"/>
</dbReference>
<dbReference type="GO" id="GO:0032731">
    <property type="term" value="P:positive regulation of interleukin-1 beta production"/>
    <property type="evidence" value="ECO:0000315"/>
    <property type="project" value="RGD"/>
</dbReference>
<dbReference type="GO" id="GO:0032755">
    <property type="term" value="P:positive regulation of interleukin-6 production"/>
    <property type="evidence" value="ECO:0000315"/>
    <property type="project" value="RGD"/>
</dbReference>
<dbReference type="GO" id="GO:0043525">
    <property type="term" value="P:positive regulation of neuron apoptotic process"/>
    <property type="evidence" value="ECO:0000315"/>
    <property type="project" value="RGD"/>
</dbReference>
<dbReference type="GO" id="GO:0045666">
    <property type="term" value="P:positive regulation of neuron differentiation"/>
    <property type="evidence" value="ECO:0000315"/>
    <property type="project" value="RGD"/>
</dbReference>
<dbReference type="GO" id="GO:0032760">
    <property type="term" value="P:positive regulation of tumor necrosis factor production"/>
    <property type="evidence" value="ECO:0000315"/>
    <property type="project" value="RGD"/>
</dbReference>
<dbReference type="GO" id="GO:0030334">
    <property type="term" value="P:regulation of cell migration"/>
    <property type="evidence" value="ECO:0000315"/>
    <property type="project" value="RGD"/>
</dbReference>
<dbReference type="GO" id="GO:0014808">
    <property type="term" value="P:release of sequestered calcium ion into cytosol by sarcoplasmic reticulum"/>
    <property type="evidence" value="ECO:0000266"/>
    <property type="project" value="RGD"/>
</dbReference>
<dbReference type="GO" id="GO:0070723">
    <property type="term" value="P:response to cholesterol"/>
    <property type="evidence" value="ECO:0000266"/>
    <property type="project" value="RGD"/>
</dbReference>
<dbReference type="GO" id="GO:0010212">
    <property type="term" value="P:response to ionizing radiation"/>
    <property type="evidence" value="ECO:0000270"/>
    <property type="project" value="RGD"/>
</dbReference>
<dbReference type="GO" id="GO:0032496">
    <property type="term" value="P:response to lipopolysaccharide"/>
    <property type="evidence" value="ECO:0000270"/>
    <property type="project" value="RGD"/>
</dbReference>
<dbReference type="GO" id="GO:0023052">
    <property type="term" value="P:signaling"/>
    <property type="evidence" value="ECO:0000266"/>
    <property type="project" value="RGD"/>
</dbReference>
<dbReference type="CDD" id="cd15184">
    <property type="entry name" value="7tmA_CCR5_CCR2"/>
    <property type="match status" value="1"/>
</dbReference>
<dbReference type="FunFam" id="1.20.1070.10:FF:000026">
    <property type="entry name" value="C-C chemokine receptor type 5"/>
    <property type="match status" value="1"/>
</dbReference>
<dbReference type="Gene3D" id="1.20.1070.10">
    <property type="entry name" value="Rhodopsin 7-helix transmembrane proteins"/>
    <property type="match status" value="1"/>
</dbReference>
<dbReference type="InterPro" id="IPR050119">
    <property type="entry name" value="CCR1-9-like"/>
</dbReference>
<dbReference type="InterPro" id="IPR002240">
    <property type="entry name" value="Chemokine_CCR5"/>
</dbReference>
<dbReference type="InterPro" id="IPR000355">
    <property type="entry name" value="Chemokine_rcpt"/>
</dbReference>
<dbReference type="InterPro" id="IPR000276">
    <property type="entry name" value="GPCR_Rhodpsn"/>
</dbReference>
<dbReference type="InterPro" id="IPR017452">
    <property type="entry name" value="GPCR_Rhodpsn_7TM"/>
</dbReference>
<dbReference type="PANTHER" id="PTHR10489:SF686">
    <property type="entry name" value="C-C CHEMOKINE RECEPTOR TYPE 5"/>
    <property type="match status" value="1"/>
</dbReference>
<dbReference type="PANTHER" id="PTHR10489">
    <property type="entry name" value="CELL ADHESION MOLECULE"/>
    <property type="match status" value="1"/>
</dbReference>
<dbReference type="Pfam" id="PF00001">
    <property type="entry name" value="7tm_1"/>
    <property type="match status" value="1"/>
</dbReference>
<dbReference type="PRINTS" id="PR00657">
    <property type="entry name" value="CCCHEMOKINER"/>
</dbReference>
<dbReference type="PRINTS" id="PR01110">
    <property type="entry name" value="CHEMOKINER5"/>
</dbReference>
<dbReference type="PRINTS" id="PR00237">
    <property type="entry name" value="GPCRRHODOPSN"/>
</dbReference>
<dbReference type="SUPFAM" id="SSF81321">
    <property type="entry name" value="Family A G protein-coupled receptor-like"/>
    <property type="match status" value="1"/>
</dbReference>
<dbReference type="PROSITE" id="PS00237">
    <property type="entry name" value="G_PROTEIN_RECEP_F1_1"/>
    <property type="match status" value="1"/>
</dbReference>
<dbReference type="PROSITE" id="PS50262">
    <property type="entry name" value="G_PROTEIN_RECEP_F1_2"/>
    <property type="match status" value="1"/>
</dbReference>
<accession>O08556</accession>
<evidence type="ECO:0000250" key="1">
    <source>
        <dbReference type="UniProtKB" id="P51681"/>
    </source>
</evidence>
<evidence type="ECO:0000255" key="2"/>
<evidence type="ECO:0000255" key="3">
    <source>
        <dbReference type="PROSITE-ProRule" id="PRU00521"/>
    </source>
</evidence>
<reference key="1">
    <citation type="journal article" date="1998" name="J. Neurosci. Res.">
        <title>Cloning of rat HIV-1-chemokine coreceptor CKR5 from microglia and upregulation of its mRNA in ischemic and endotoxinemic rat brain.</title>
        <authorList>
            <person name="Spleiss O."/>
            <person name="Gourmala N."/>
            <person name="Boddeke H.W.G.M."/>
            <person name="Sauter A."/>
            <person name="Fiebich B.L."/>
            <person name="Berger M."/>
            <person name="Gebicke-Haerter P.J."/>
        </authorList>
    </citation>
    <scope>NUCLEOTIDE SEQUENCE [MRNA]</scope>
    <source>
        <strain>Wistar</strain>
        <tissue>Brain</tissue>
    </source>
</reference>
<reference key="2">
    <citation type="journal article" date="1998" name="J. Neuroimmunol.">
        <title>Chemokine receptor expression in cultured glia and rat experimental allergic encephalomyelitis.</title>
        <authorList>
            <person name="Jiang Y."/>
            <person name="Salafranca M.N."/>
            <person name="Adhikari S."/>
            <person name="Xia Y."/>
            <person name="Feng L."/>
            <person name="Sonntag M.K."/>
            <person name="deFiebre C.M."/>
            <person name="Pennell N.A."/>
            <person name="Streit W.J."/>
            <person name="Harrison J.K."/>
        </authorList>
    </citation>
    <scope>NUCLEOTIDE SEQUENCE [GENOMIC DNA]</scope>
    <source>
        <strain>Sprague-Dawley</strain>
    </source>
</reference>
<name>CCR5_RAT</name>
<feature type="chain" id="PRO_0000069280" description="C-C chemokine receptor type 5">
    <location>
        <begin position="1"/>
        <end position="354"/>
    </location>
</feature>
<feature type="topological domain" description="Extracellular" evidence="2">
    <location>
        <begin position="1"/>
        <end position="32"/>
    </location>
</feature>
<feature type="transmembrane region" description="Helical; Name=1" evidence="2">
    <location>
        <begin position="33"/>
        <end position="60"/>
    </location>
</feature>
<feature type="topological domain" description="Cytoplasmic" evidence="2">
    <location>
        <begin position="61"/>
        <end position="70"/>
    </location>
</feature>
<feature type="transmembrane region" description="Helical; Name=2" evidence="2">
    <location>
        <begin position="71"/>
        <end position="91"/>
    </location>
</feature>
<feature type="topological domain" description="Extracellular" evidence="2">
    <location>
        <begin position="92"/>
        <end position="104"/>
    </location>
</feature>
<feature type="transmembrane region" description="Helical; Name=3" evidence="2">
    <location>
        <begin position="105"/>
        <end position="126"/>
    </location>
</feature>
<feature type="topological domain" description="Cytoplasmic" evidence="2">
    <location>
        <begin position="127"/>
        <end position="143"/>
    </location>
</feature>
<feature type="transmembrane region" description="Helical; Name=4" evidence="2">
    <location>
        <begin position="144"/>
        <end position="168"/>
    </location>
</feature>
<feature type="topological domain" description="Extracellular" evidence="2">
    <location>
        <begin position="169"/>
        <end position="200"/>
    </location>
</feature>
<feature type="transmembrane region" description="Helical; Name=5" evidence="2">
    <location>
        <begin position="201"/>
        <end position="220"/>
    </location>
</feature>
<feature type="topological domain" description="Cytoplasmic" evidence="2">
    <location>
        <begin position="221"/>
        <end position="237"/>
    </location>
</feature>
<feature type="transmembrane region" description="Helical; Name=6" evidence="2">
    <location>
        <begin position="238"/>
        <end position="262"/>
    </location>
</feature>
<feature type="topological domain" description="Extracellular" evidence="2">
    <location>
        <begin position="263"/>
        <end position="279"/>
    </location>
</feature>
<feature type="transmembrane region" description="Helical; Name=7" evidence="2">
    <location>
        <begin position="280"/>
        <end position="303"/>
    </location>
</feature>
<feature type="topological domain" description="Cytoplasmic" evidence="2">
    <location>
        <begin position="304"/>
        <end position="354"/>
    </location>
</feature>
<feature type="modified residue" description="Sulfotyrosine" evidence="2">
    <location>
        <position position="10"/>
    </location>
</feature>
<feature type="modified residue" description="Sulfotyrosine" evidence="2">
    <location>
        <position position="16"/>
    </location>
</feature>
<feature type="modified residue" description="Phosphoserine; by BARK1" evidence="1">
    <location>
        <position position="338"/>
    </location>
</feature>
<feature type="modified residue" description="Phosphoserine; by BARK1" evidence="1">
    <location>
        <position position="339"/>
    </location>
</feature>
<feature type="modified residue" description="Phosphoserine; by BARK1" evidence="1">
    <location>
        <position position="344"/>
    </location>
</feature>
<feature type="modified residue" description="Phosphoserine; by BARK1" evidence="1">
    <location>
        <position position="351"/>
    </location>
</feature>
<feature type="lipid moiety-binding region" description="S-palmitoyl cysteine" evidence="1">
    <location>
        <position position="323"/>
    </location>
</feature>
<feature type="lipid moiety-binding region" description="S-palmitoyl cysteine" evidence="1">
    <location>
        <position position="326"/>
    </location>
</feature>
<feature type="glycosylation site" description="O-linked (GalNAc...) serine" evidence="1">
    <location>
        <position position="6"/>
    </location>
</feature>
<feature type="disulfide bond" evidence="1">
    <location>
        <begin position="22"/>
        <end position="271"/>
    </location>
</feature>
<feature type="disulfide bond" evidence="3">
    <location>
        <begin position="103"/>
        <end position="180"/>
    </location>
</feature>
<gene>
    <name type="primary">Ccr5</name>
    <name type="synonym">Cmkbr5</name>
</gene>
<organism>
    <name type="scientific">Rattus norvegicus</name>
    <name type="common">Rat</name>
    <dbReference type="NCBI Taxonomy" id="10116"/>
    <lineage>
        <taxon>Eukaryota</taxon>
        <taxon>Metazoa</taxon>
        <taxon>Chordata</taxon>
        <taxon>Craniata</taxon>
        <taxon>Vertebrata</taxon>
        <taxon>Euteleostomi</taxon>
        <taxon>Mammalia</taxon>
        <taxon>Eutheria</taxon>
        <taxon>Euarchontoglires</taxon>
        <taxon>Glires</taxon>
        <taxon>Rodentia</taxon>
        <taxon>Myomorpha</taxon>
        <taxon>Muroidea</taxon>
        <taxon>Muridae</taxon>
        <taxon>Murinae</taxon>
        <taxon>Rattus</taxon>
    </lineage>
</organism>